<organism>
    <name type="scientific">Neisseria meningitidis serogroup A / serotype 4A (strain DSM 15465 / Z2491)</name>
    <dbReference type="NCBI Taxonomy" id="122587"/>
    <lineage>
        <taxon>Bacteria</taxon>
        <taxon>Pseudomonadati</taxon>
        <taxon>Pseudomonadota</taxon>
        <taxon>Betaproteobacteria</taxon>
        <taxon>Neisseriales</taxon>
        <taxon>Neisseriaceae</taxon>
        <taxon>Neisseria</taxon>
    </lineage>
</organism>
<accession>P0A0V2</accession>
<accession>A1ITT6</accession>
<accession>P38367</accession>
<protein>
    <recommendedName>
        <fullName>Outer membrane protein class 4</fullName>
    </recommendedName>
</protein>
<comment type="subcellular location">
    <subcellularLocation>
        <location evidence="2">Cell outer membrane</location>
        <topology evidence="1">Multi-pass membrane protein</topology>
    </subcellularLocation>
</comment>
<comment type="similarity">
    <text evidence="5">Belongs to the outer membrane OOP (TC 1.B.6) superfamily.</text>
</comment>
<keyword id="KW-0998">Cell outer membrane</keyword>
<keyword id="KW-1015">Disulfide bond</keyword>
<keyword id="KW-0406">Ion transport</keyword>
<keyword id="KW-0472">Membrane</keyword>
<keyword id="KW-0626">Porin</keyword>
<keyword id="KW-0677">Repeat</keyword>
<keyword id="KW-0732">Signal</keyword>
<keyword id="KW-0812">Transmembrane</keyword>
<keyword id="KW-1134">Transmembrane beta strand</keyword>
<keyword id="KW-0813">Transport</keyword>
<name>OMP4_NEIMA</name>
<gene>
    <name type="primary">rmpM</name>
    <name type="ordered locus">NMA2105</name>
</gene>
<evidence type="ECO:0000250" key="1"/>
<evidence type="ECO:0000250" key="2">
    <source>
        <dbReference type="UniProtKB" id="P0A910"/>
    </source>
</evidence>
<evidence type="ECO:0000255" key="3"/>
<evidence type="ECO:0000255" key="4">
    <source>
        <dbReference type="PROSITE-ProRule" id="PRU00473"/>
    </source>
</evidence>
<evidence type="ECO:0000305" key="5"/>
<sequence length="242" mass="26141">MTKQLKLSALFVALLASGTAVAGEASVQGYTVSGQSNEIVRNNYGECWKNAYFDKASQGRVECGDAVAAPEPEPEPEPAPAPVVVVEQAPQYVDETISLSAKTLFGFDKDSLRAEAQDNLKVLAQRLGQTNIQSVRVEGHTDFMGSDKYNQALSERRAYVVANNLVSNGVPVSRISAVGLGESQAQMTQVCEAEVAKLGAKVSKAKKREALIACIEPDRRVDVKIRSIVTRQVVPAHNHHQH</sequence>
<proteinExistence type="inferred from homology"/>
<dbReference type="EMBL" id="AL157959">
    <property type="protein sequence ID" value="CAM09205.1"/>
    <property type="molecule type" value="Genomic_DNA"/>
</dbReference>
<dbReference type="PIR" id="A81782">
    <property type="entry name" value="A81782"/>
</dbReference>
<dbReference type="RefSeq" id="WP_002226062.1">
    <property type="nucleotide sequence ID" value="NC_003116.1"/>
</dbReference>
<dbReference type="SMR" id="P0A0V2"/>
<dbReference type="EnsemblBacteria" id="CAM09205">
    <property type="protein sequence ID" value="CAM09205"/>
    <property type="gene ID" value="NMA2105"/>
</dbReference>
<dbReference type="GeneID" id="93387474"/>
<dbReference type="KEGG" id="nma:NMA2105"/>
<dbReference type="HOGENOM" id="CLU_016890_5_0_4"/>
<dbReference type="Proteomes" id="UP000000626">
    <property type="component" value="Chromosome"/>
</dbReference>
<dbReference type="GO" id="GO:0009279">
    <property type="term" value="C:cell outer membrane"/>
    <property type="evidence" value="ECO:0007669"/>
    <property type="project" value="UniProtKB-SubCell"/>
</dbReference>
<dbReference type="GO" id="GO:0046930">
    <property type="term" value="C:pore complex"/>
    <property type="evidence" value="ECO:0007669"/>
    <property type="project" value="UniProtKB-KW"/>
</dbReference>
<dbReference type="GO" id="GO:0015288">
    <property type="term" value="F:porin activity"/>
    <property type="evidence" value="ECO:0007669"/>
    <property type="project" value="UniProtKB-KW"/>
</dbReference>
<dbReference type="GO" id="GO:0006811">
    <property type="term" value="P:monoatomic ion transport"/>
    <property type="evidence" value="ECO:0007669"/>
    <property type="project" value="UniProtKB-KW"/>
</dbReference>
<dbReference type="CDD" id="cd07185">
    <property type="entry name" value="OmpA_C-like"/>
    <property type="match status" value="1"/>
</dbReference>
<dbReference type="FunFam" id="3.30.1330.60:FF:000010">
    <property type="entry name" value="Outer membrane protein class 4"/>
    <property type="match status" value="1"/>
</dbReference>
<dbReference type="Gene3D" id="3.30.1330.60">
    <property type="entry name" value="OmpA-like domain"/>
    <property type="match status" value="1"/>
</dbReference>
<dbReference type="InterPro" id="IPR050330">
    <property type="entry name" value="Bact_OuterMem_StrucFunc"/>
</dbReference>
<dbReference type="InterPro" id="IPR006664">
    <property type="entry name" value="OMP_bac"/>
</dbReference>
<dbReference type="InterPro" id="IPR006665">
    <property type="entry name" value="OmpA-like"/>
</dbReference>
<dbReference type="InterPro" id="IPR006690">
    <property type="entry name" value="OMPA-like_CS"/>
</dbReference>
<dbReference type="InterPro" id="IPR036737">
    <property type="entry name" value="OmpA-like_sf"/>
</dbReference>
<dbReference type="PANTHER" id="PTHR30329:SF21">
    <property type="entry name" value="LIPOPROTEIN YIAD-RELATED"/>
    <property type="match status" value="1"/>
</dbReference>
<dbReference type="PANTHER" id="PTHR30329">
    <property type="entry name" value="STATOR ELEMENT OF FLAGELLAR MOTOR COMPLEX"/>
    <property type="match status" value="1"/>
</dbReference>
<dbReference type="Pfam" id="PF00691">
    <property type="entry name" value="OmpA"/>
    <property type="match status" value="1"/>
</dbReference>
<dbReference type="PRINTS" id="PR01021">
    <property type="entry name" value="OMPADOMAIN"/>
</dbReference>
<dbReference type="SUPFAM" id="SSF103088">
    <property type="entry name" value="OmpA-like"/>
    <property type="match status" value="1"/>
</dbReference>
<dbReference type="PROSITE" id="PS01068">
    <property type="entry name" value="OMPA_1"/>
    <property type="match status" value="1"/>
</dbReference>
<dbReference type="PROSITE" id="PS51123">
    <property type="entry name" value="OMPA_2"/>
    <property type="match status" value="1"/>
</dbReference>
<feature type="signal peptide" evidence="3">
    <location>
        <begin position="1"/>
        <end position="22"/>
    </location>
</feature>
<feature type="chain" id="PRO_0000020111" description="Outer membrane protein class 4">
    <location>
        <begin position="23"/>
        <end position="242"/>
    </location>
</feature>
<feature type="repeat" description="1">
    <location>
        <begin position="69"/>
        <end position="70"/>
    </location>
</feature>
<feature type="repeat" description="2">
    <location>
        <begin position="71"/>
        <end position="72"/>
    </location>
</feature>
<feature type="repeat" description="3">
    <location>
        <begin position="73"/>
        <end position="74"/>
    </location>
</feature>
<feature type="repeat" description="4">
    <location>
        <begin position="75"/>
        <end position="76"/>
    </location>
</feature>
<feature type="repeat" description="5">
    <location>
        <begin position="77"/>
        <end position="78"/>
    </location>
</feature>
<feature type="repeat" description="6">
    <location>
        <begin position="79"/>
        <end position="80"/>
    </location>
</feature>
<feature type="repeat" description="7">
    <location>
        <begin position="81"/>
        <end position="82"/>
    </location>
</feature>
<feature type="domain" description="OmpA-like" evidence="4">
    <location>
        <begin position="92"/>
        <end position="229"/>
    </location>
</feature>
<feature type="region of interest" description="7 X 2 AA tandem repeats of X-P">
    <location>
        <begin position="69"/>
        <end position="82"/>
    </location>
</feature>
<feature type="disulfide bond" evidence="1">
    <location>
        <begin position="191"/>
        <end position="214"/>
    </location>
</feature>
<reference key="1">
    <citation type="journal article" date="2000" name="Nature">
        <title>Complete DNA sequence of a serogroup A strain of Neisseria meningitidis Z2491.</title>
        <authorList>
            <person name="Parkhill J."/>
            <person name="Achtman M."/>
            <person name="James K.D."/>
            <person name="Bentley S.D."/>
            <person name="Churcher C.M."/>
            <person name="Klee S.R."/>
            <person name="Morelli G."/>
            <person name="Basham D."/>
            <person name="Brown D."/>
            <person name="Chillingworth T."/>
            <person name="Davies R.M."/>
            <person name="Davis P."/>
            <person name="Devlin K."/>
            <person name="Feltwell T."/>
            <person name="Hamlin N."/>
            <person name="Holroyd S."/>
            <person name="Jagels K."/>
            <person name="Leather S."/>
            <person name="Moule S."/>
            <person name="Mungall K.L."/>
            <person name="Quail M.A."/>
            <person name="Rajandream M.A."/>
            <person name="Rutherford K.M."/>
            <person name="Simmonds M."/>
            <person name="Skelton J."/>
            <person name="Whitehead S."/>
            <person name="Spratt B.G."/>
            <person name="Barrell B.G."/>
        </authorList>
    </citation>
    <scope>NUCLEOTIDE SEQUENCE [LARGE SCALE GENOMIC DNA]</scope>
    <source>
        <strain>DSM 15465 / Z2491</strain>
    </source>
</reference>